<reference key="1">
    <citation type="submission" date="2006-08" db="EMBL/GenBank/DDBJ databases">
        <title>Complete sequence of Shewanella sp. MR-4.</title>
        <authorList>
            <consortium name="US DOE Joint Genome Institute"/>
            <person name="Copeland A."/>
            <person name="Lucas S."/>
            <person name="Lapidus A."/>
            <person name="Barry K."/>
            <person name="Detter J.C."/>
            <person name="Glavina del Rio T."/>
            <person name="Hammon N."/>
            <person name="Israni S."/>
            <person name="Dalin E."/>
            <person name="Tice H."/>
            <person name="Pitluck S."/>
            <person name="Kiss H."/>
            <person name="Brettin T."/>
            <person name="Bruce D."/>
            <person name="Han C."/>
            <person name="Tapia R."/>
            <person name="Gilna P."/>
            <person name="Schmutz J."/>
            <person name="Larimer F."/>
            <person name="Land M."/>
            <person name="Hauser L."/>
            <person name="Kyrpides N."/>
            <person name="Mikhailova N."/>
            <person name="Nealson K."/>
            <person name="Konstantinidis K."/>
            <person name="Klappenbach J."/>
            <person name="Tiedje J."/>
            <person name="Richardson P."/>
        </authorList>
    </citation>
    <scope>NUCLEOTIDE SEQUENCE [LARGE SCALE GENOMIC DNA]</scope>
    <source>
        <strain>MR-4</strain>
    </source>
</reference>
<evidence type="ECO:0000255" key="1">
    <source>
        <dbReference type="HAMAP-Rule" id="MF_01595"/>
    </source>
</evidence>
<name>PNP_SHESM</name>
<organism>
    <name type="scientific">Shewanella sp. (strain MR-4)</name>
    <dbReference type="NCBI Taxonomy" id="60480"/>
    <lineage>
        <taxon>Bacteria</taxon>
        <taxon>Pseudomonadati</taxon>
        <taxon>Pseudomonadota</taxon>
        <taxon>Gammaproteobacteria</taxon>
        <taxon>Alteromonadales</taxon>
        <taxon>Shewanellaceae</taxon>
        <taxon>Shewanella</taxon>
    </lineage>
</organism>
<comment type="function">
    <text evidence="1">Involved in mRNA degradation. Catalyzes the phosphorolysis of single-stranded polyribonucleotides processively in the 3'- to 5'-direction.</text>
</comment>
<comment type="catalytic activity">
    <reaction evidence="1">
        <text>RNA(n+1) + phosphate = RNA(n) + a ribonucleoside 5'-diphosphate</text>
        <dbReference type="Rhea" id="RHEA:22096"/>
        <dbReference type="Rhea" id="RHEA-COMP:14527"/>
        <dbReference type="Rhea" id="RHEA-COMP:17342"/>
        <dbReference type="ChEBI" id="CHEBI:43474"/>
        <dbReference type="ChEBI" id="CHEBI:57930"/>
        <dbReference type="ChEBI" id="CHEBI:140395"/>
        <dbReference type="EC" id="2.7.7.8"/>
    </reaction>
</comment>
<comment type="cofactor">
    <cofactor evidence="1">
        <name>Mg(2+)</name>
        <dbReference type="ChEBI" id="CHEBI:18420"/>
    </cofactor>
</comment>
<comment type="subunit">
    <text evidence="1">Component of the RNA degradosome, which is a multiprotein complex involved in RNA processing and mRNA degradation.</text>
</comment>
<comment type="subcellular location">
    <subcellularLocation>
        <location evidence="1">Cytoplasm</location>
    </subcellularLocation>
</comment>
<comment type="similarity">
    <text evidence="1">Belongs to the polyribonucleotide nucleotidyltransferase family.</text>
</comment>
<proteinExistence type="inferred from homology"/>
<dbReference type="EC" id="2.7.7.8" evidence="1"/>
<dbReference type="EMBL" id="CP000446">
    <property type="protein sequence ID" value="ABI38111.1"/>
    <property type="molecule type" value="Genomic_DNA"/>
</dbReference>
<dbReference type="RefSeq" id="WP_011621822.1">
    <property type="nucleotide sequence ID" value="NC_008321.1"/>
</dbReference>
<dbReference type="SMR" id="Q0HLF6"/>
<dbReference type="KEGG" id="she:Shewmr4_1031"/>
<dbReference type="HOGENOM" id="CLU_004217_2_2_6"/>
<dbReference type="GO" id="GO:0005829">
    <property type="term" value="C:cytosol"/>
    <property type="evidence" value="ECO:0007669"/>
    <property type="project" value="TreeGrafter"/>
</dbReference>
<dbReference type="GO" id="GO:0000175">
    <property type="term" value="F:3'-5'-RNA exonuclease activity"/>
    <property type="evidence" value="ECO:0007669"/>
    <property type="project" value="TreeGrafter"/>
</dbReference>
<dbReference type="GO" id="GO:0000287">
    <property type="term" value="F:magnesium ion binding"/>
    <property type="evidence" value="ECO:0007669"/>
    <property type="project" value="UniProtKB-UniRule"/>
</dbReference>
<dbReference type="GO" id="GO:0004654">
    <property type="term" value="F:polyribonucleotide nucleotidyltransferase activity"/>
    <property type="evidence" value="ECO:0007669"/>
    <property type="project" value="UniProtKB-UniRule"/>
</dbReference>
<dbReference type="GO" id="GO:0003723">
    <property type="term" value="F:RNA binding"/>
    <property type="evidence" value="ECO:0007669"/>
    <property type="project" value="UniProtKB-UniRule"/>
</dbReference>
<dbReference type="GO" id="GO:0006402">
    <property type="term" value="P:mRNA catabolic process"/>
    <property type="evidence" value="ECO:0007669"/>
    <property type="project" value="UniProtKB-UniRule"/>
</dbReference>
<dbReference type="GO" id="GO:0006396">
    <property type="term" value="P:RNA processing"/>
    <property type="evidence" value="ECO:0007669"/>
    <property type="project" value="InterPro"/>
</dbReference>
<dbReference type="CDD" id="cd02393">
    <property type="entry name" value="KH-I_PNPase"/>
    <property type="match status" value="1"/>
</dbReference>
<dbReference type="CDD" id="cd11363">
    <property type="entry name" value="RNase_PH_PNPase_1"/>
    <property type="match status" value="1"/>
</dbReference>
<dbReference type="CDD" id="cd11364">
    <property type="entry name" value="RNase_PH_PNPase_2"/>
    <property type="match status" value="1"/>
</dbReference>
<dbReference type="CDD" id="cd04472">
    <property type="entry name" value="S1_PNPase"/>
    <property type="match status" value="1"/>
</dbReference>
<dbReference type="FunFam" id="2.40.50.140:FF:000023">
    <property type="entry name" value="Polyribonucleotide nucleotidyltransferase"/>
    <property type="match status" value="1"/>
</dbReference>
<dbReference type="FunFam" id="3.30.1370.10:FF:000001">
    <property type="entry name" value="Polyribonucleotide nucleotidyltransferase"/>
    <property type="match status" value="1"/>
</dbReference>
<dbReference type="FunFam" id="3.30.230.70:FF:000001">
    <property type="entry name" value="Polyribonucleotide nucleotidyltransferase"/>
    <property type="match status" value="1"/>
</dbReference>
<dbReference type="FunFam" id="3.30.230.70:FF:000002">
    <property type="entry name" value="Polyribonucleotide nucleotidyltransferase"/>
    <property type="match status" value="1"/>
</dbReference>
<dbReference type="Gene3D" id="3.30.230.70">
    <property type="entry name" value="GHMP Kinase, N-terminal domain"/>
    <property type="match status" value="2"/>
</dbReference>
<dbReference type="Gene3D" id="3.30.1370.10">
    <property type="entry name" value="K Homology domain, type 1"/>
    <property type="match status" value="1"/>
</dbReference>
<dbReference type="Gene3D" id="2.40.50.140">
    <property type="entry name" value="Nucleic acid-binding proteins"/>
    <property type="match status" value="1"/>
</dbReference>
<dbReference type="HAMAP" id="MF_01595">
    <property type="entry name" value="PNPase"/>
    <property type="match status" value="1"/>
</dbReference>
<dbReference type="InterPro" id="IPR001247">
    <property type="entry name" value="ExoRNase_PH_dom1"/>
</dbReference>
<dbReference type="InterPro" id="IPR015847">
    <property type="entry name" value="ExoRNase_PH_dom2"/>
</dbReference>
<dbReference type="InterPro" id="IPR036345">
    <property type="entry name" value="ExoRNase_PH_dom2_sf"/>
</dbReference>
<dbReference type="InterPro" id="IPR004087">
    <property type="entry name" value="KH_dom"/>
</dbReference>
<dbReference type="InterPro" id="IPR004088">
    <property type="entry name" value="KH_dom_type_1"/>
</dbReference>
<dbReference type="InterPro" id="IPR036612">
    <property type="entry name" value="KH_dom_type_1_sf"/>
</dbReference>
<dbReference type="InterPro" id="IPR012340">
    <property type="entry name" value="NA-bd_OB-fold"/>
</dbReference>
<dbReference type="InterPro" id="IPR012162">
    <property type="entry name" value="PNPase"/>
</dbReference>
<dbReference type="InterPro" id="IPR027408">
    <property type="entry name" value="PNPase/RNase_PH_dom_sf"/>
</dbReference>
<dbReference type="InterPro" id="IPR015848">
    <property type="entry name" value="PNPase_PH_RNA-bd_bac/org-type"/>
</dbReference>
<dbReference type="InterPro" id="IPR036456">
    <property type="entry name" value="PNPase_PH_RNA-bd_sf"/>
</dbReference>
<dbReference type="InterPro" id="IPR020568">
    <property type="entry name" value="Ribosomal_Su5_D2-typ_SF"/>
</dbReference>
<dbReference type="InterPro" id="IPR003029">
    <property type="entry name" value="S1_domain"/>
</dbReference>
<dbReference type="NCBIfam" id="TIGR03591">
    <property type="entry name" value="polynuc_phos"/>
    <property type="match status" value="1"/>
</dbReference>
<dbReference type="NCBIfam" id="NF008805">
    <property type="entry name" value="PRK11824.1"/>
    <property type="match status" value="1"/>
</dbReference>
<dbReference type="PANTHER" id="PTHR11252">
    <property type="entry name" value="POLYRIBONUCLEOTIDE NUCLEOTIDYLTRANSFERASE"/>
    <property type="match status" value="1"/>
</dbReference>
<dbReference type="PANTHER" id="PTHR11252:SF0">
    <property type="entry name" value="POLYRIBONUCLEOTIDE NUCLEOTIDYLTRANSFERASE 1, MITOCHONDRIAL"/>
    <property type="match status" value="1"/>
</dbReference>
<dbReference type="Pfam" id="PF00013">
    <property type="entry name" value="KH_1"/>
    <property type="match status" value="1"/>
</dbReference>
<dbReference type="Pfam" id="PF03726">
    <property type="entry name" value="PNPase"/>
    <property type="match status" value="1"/>
</dbReference>
<dbReference type="Pfam" id="PF01138">
    <property type="entry name" value="RNase_PH"/>
    <property type="match status" value="2"/>
</dbReference>
<dbReference type="Pfam" id="PF03725">
    <property type="entry name" value="RNase_PH_C"/>
    <property type="match status" value="2"/>
</dbReference>
<dbReference type="Pfam" id="PF00575">
    <property type="entry name" value="S1"/>
    <property type="match status" value="1"/>
</dbReference>
<dbReference type="PIRSF" id="PIRSF005499">
    <property type="entry name" value="PNPase"/>
    <property type="match status" value="1"/>
</dbReference>
<dbReference type="SMART" id="SM00322">
    <property type="entry name" value="KH"/>
    <property type="match status" value="1"/>
</dbReference>
<dbReference type="SMART" id="SM00316">
    <property type="entry name" value="S1"/>
    <property type="match status" value="1"/>
</dbReference>
<dbReference type="SUPFAM" id="SSF54791">
    <property type="entry name" value="Eukaryotic type KH-domain (KH-domain type I)"/>
    <property type="match status" value="1"/>
</dbReference>
<dbReference type="SUPFAM" id="SSF50249">
    <property type="entry name" value="Nucleic acid-binding proteins"/>
    <property type="match status" value="1"/>
</dbReference>
<dbReference type="SUPFAM" id="SSF46915">
    <property type="entry name" value="Polynucleotide phosphorylase/guanosine pentaphosphate synthase (PNPase/GPSI), domain 3"/>
    <property type="match status" value="1"/>
</dbReference>
<dbReference type="SUPFAM" id="SSF55666">
    <property type="entry name" value="Ribonuclease PH domain 2-like"/>
    <property type="match status" value="2"/>
</dbReference>
<dbReference type="SUPFAM" id="SSF54211">
    <property type="entry name" value="Ribosomal protein S5 domain 2-like"/>
    <property type="match status" value="2"/>
</dbReference>
<dbReference type="PROSITE" id="PS50084">
    <property type="entry name" value="KH_TYPE_1"/>
    <property type="match status" value="1"/>
</dbReference>
<dbReference type="PROSITE" id="PS50126">
    <property type="entry name" value="S1"/>
    <property type="match status" value="1"/>
</dbReference>
<accession>Q0HLF6</accession>
<keyword id="KW-0963">Cytoplasm</keyword>
<keyword id="KW-0460">Magnesium</keyword>
<keyword id="KW-0479">Metal-binding</keyword>
<keyword id="KW-0548">Nucleotidyltransferase</keyword>
<keyword id="KW-0694">RNA-binding</keyword>
<keyword id="KW-0808">Transferase</keyword>
<protein>
    <recommendedName>
        <fullName evidence="1">Polyribonucleotide nucleotidyltransferase</fullName>
        <ecNumber evidence="1">2.7.7.8</ecNumber>
    </recommendedName>
    <alternativeName>
        <fullName evidence="1">Polynucleotide phosphorylase</fullName>
        <shortName evidence="1">PNPase</shortName>
    </alternativeName>
</protein>
<sequence>MNPIVKSFEYGQHTVTLETGVIARQADAAVLASMGDTTVLVTVVGKKEAEAGRDFFPLTVNYQEKTYAAGKIPGGFFKREGRPSEDETLIARLIDRPIRPLFPNGFTNEVQVIITVVSVDPQIEPDIISMIGTSAALAISGIPFSGPLGAARVGYINGEYVLNPTVTQLANSQLNLVVAGTEGAVLMVESEAQALPEEVMLGSVVYGHDQQQVVIKAIAEFKAEAGKPAWNWTAPVANEALVAQVKELAEVGLAQAYQIQVKQERYAQVAVVKAAAKEALLAANPEVDLREVDGLLGSLEKKVVRGRIIRGEPRIDGREPDMVRALSVLAGVLPRTHGSALFTRGETQALVTCTLGTERDAQKIDSIMGERTNRFMLHYNFPPYSVGETGMVGSPKRREIGHGKLAWRGINAVMPSAEEFPYSVRVVSEITESNGSSSMASVCGTSLALMDAGVPIKTSVAGIAMGLVKEGDNFVVLSDILGDEDHLGDMDFKVAGTRDGVTALQMDIKIEGITKEIMEIALQQAYGARVHILNVMDQAIGSHRDDISDHAPRITTIKINPEKIRDVIGKGGAVIRALTEETGTTIELEDDGTVKIASSNGEATKEAIRRIEEITSEVEVGRIYNGKVIRIVDFGAFVNILPGKDGLVHISQISDERVANVSDHLELNQEVTVKVMEVDRQGRVRLSIKEAQTKEAAAE</sequence>
<gene>
    <name evidence="1" type="primary">pnp</name>
    <name type="ordered locus">Shewmr4_1031</name>
</gene>
<feature type="chain" id="PRO_0000329845" description="Polyribonucleotide nucleotidyltransferase">
    <location>
        <begin position="1"/>
        <end position="699"/>
    </location>
</feature>
<feature type="domain" description="KH" evidence="1">
    <location>
        <begin position="552"/>
        <end position="611"/>
    </location>
</feature>
<feature type="domain" description="S1 motif" evidence="1">
    <location>
        <begin position="621"/>
        <end position="689"/>
    </location>
</feature>
<feature type="binding site" evidence="1">
    <location>
        <position position="485"/>
    </location>
    <ligand>
        <name>Mg(2+)</name>
        <dbReference type="ChEBI" id="CHEBI:18420"/>
    </ligand>
</feature>
<feature type="binding site" evidence="1">
    <location>
        <position position="491"/>
    </location>
    <ligand>
        <name>Mg(2+)</name>
        <dbReference type="ChEBI" id="CHEBI:18420"/>
    </ligand>
</feature>